<accession>A6U864</accession>
<organism>
    <name type="scientific">Sinorhizobium medicae (strain WSM419)</name>
    <name type="common">Ensifer medicae</name>
    <dbReference type="NCBI Taxonomy" id="366394"/>
    <lineage>
        <taxon>Bacteria</taxon>
        <taxon>Pseudomonadati</taxon>
        <taxon>Pseudomonadota</taxon>
        <taxon>Alphaproteobacteria</taxon>
        <taxon>Hyphomicrobiales</taxon>
        <taxon>Rhizobiaceae</taxon>
        <taxon>Sinorhizobium/Ensifer group</taxon>
        <taxon>Sinorhizobium</taxon>
    </lineage>
</organism>
<feature type="chain" id="PRO_1000052655" description="Large ribosomal subunit protein uL22">
    <location>
        <begin position="1"/>
        <end position="129"/>
    </location>
</feature>
<proteinExistence type="inferred from homology"/>
<comment type="function">
    <text evidence="1">This protein binds specifically to 23S rRNA; its binding is stimulated by other ribosomal proteins, e.g. L4, L17, and L20. It is important during the early stages of 50S assembly. It makes multiple contacts with different domains of the 23S rRNA in the assembled 50S subunit and ribosome (By similarity).</text>
</comment>
<comment type="function">
    <text evidence="1">The globular domain of the protein is located near the polypeptide exit tunnel on the outside of the subunit, while an extended beta-hairpin is found that lines the wall of the exit tunnel in the center of the 70S ribosome.</text>
</comment>
<comment type="subunit">
    <text evidence="1">Part of the 50S ribosomal subunit.</text>
</comment>
<comment type="similarity">
    <text evidence="1">Belongs to the universal ribosomal protein uL22 family.</text>
</comment>
<dbReference type="EMBL" id="CP000738">
    <property type="protein sequence ID" value="ABR59844.1"/>
    <property type="molecule type" value="Genomic_DNA"/>
</dbReference>
<dbReference type="RefSeq" id="WP_011975173.1">
    <property type="nucleotide sequence ID" value="NC_009636.1"/>
</dbReference>
<dbReference type="RefSeq" id="YP_001326679.1">
    <property type="nucleotide sequence ID" value="NC_009636.1"/>
</dbReference>
<dbReference type="SMR" id="A6U864"/>
<dbReference type="STRING" id="366394.Smed_0991"/>
<dbReference type="GeneID" id="61614925"/>
<dbReference type="KEGG" id="smd:Smed_0991"/>
<dbReference type="PATRIC" id="fig|366394.8.peg.4112"/>
<dbReference type="eggNOG" id="COG0091">
    <property type="taxonomic scope" value="Bacteria"/>
</dbReference>
<dbReference type="HOGENOM" id="CLU_083987_3_0_5"/>
<dbReference type="OrthoDB" id="9805969at2"/>
<dbReference type="Proteomes" id="UP000001108">
    <property type="component" value="Chromosome"/>
</dbReference>
<dbReference type="GO" id="GO:0022625">
    <property type="term" value="C:cytosolic large ribosomal subunit"/>
    <property type="evidence" value="ECO:0007669"/>
    <property type="project" value="TreeGrafter"/>
</dbReference>
<dbReference type="GO" id="GO:0019843">
    <property type="term" value="F:rRNA binding"/>
    <property type="evidence" value="ECO:0007669"/>
    <property type="project" value="UniProtKB-UniRule"/>
</dbReference>
<dbReference type="GO" id="GO:0003735">
    <property type="term" value="F:structural constituent of ribosome"/>
    <property type="evidence" value="ECO:0007669"/>
    <property type="project" value="InterPro"/>
</dbReference>
<dbReference type="GO" id="GO:0006412">
    <property type="term" value="P:translation"/>
    <property type="evidence" value="ECO:0007669"/>
    <property type="project" value="UniProtKB-UniRule"/>
</dbReference>
<dbReference type="CDD" id="cd00336">
    <property type="entry name" value="Ribosomal_L22"/>
    <property type="match status" value="1"/>
</dbReference>
<dbReference type="Gene3D" id="3.90.470.10">
    <property type="entry name" value="Ribosomal protein L22/L17"/>
    <property type="match status" value="1"/>
</dbReference>
<dbReference type="HAMAP" id="MF_01331_B">
    <property type="entry name" value="Ribosomal_uL22_B"/>
    <property type="match status" value="1"/>
</dbReference>
<dbReference type="InterPro" id="IPR001063">
    <property type="entry name" value="Ribosomal_uL22"/>
</dbReference>
<dbReference type="InterPro" id="IPR005727">
    <property type="entry name" value="Ribosomal_uL22_bac/chlpt-type"/>
</dbReference>
<dbReference type="InterPro" id="IPR047867">
    <property type="entry name" value="Ribosomal_uL22_bac/org-type"/>
</dbReference>
<dbReference type="InterPro" id="IPR018260">
    <property type="entry name" value="Ribosomal_uL22_CS"/>
</dbReference>
<dbReference type="InterPro" id="IPR036394">
    <property type="entry name" value="Ribosomal_uL22_sf"/>
</dbReference>
<dbReference type="NCBIfam" id="TIGR01044">
    <property type="entry name" value="rplV_bact"/>
    <property type="match status" value="1"/>
</dbReference>
<dbReference type="PANTHER" id="PTHR13501">
    <property type="entry name" value="CHLOROPLAST 50S RIBOSOMAL PROTEIN L22-RELATED"/>
    <property type="match status" value="1"/>
</dbReference>
<dbReference type="PANTHER" id="PTHR13501:SF8">
    <property type="entry name" value="LARGE RIBOSOMAL SUBUNIT PROTEIN UL22M"/>
    <property type="match status" value="1"/>
</dbReference>
<dbReference type="Pfam" id="PF00237">
    <property type="entry name" value="Ribosomal_L22"/>
    <property type="match status" value="1"/>
</dbReference>
<dbReference type="SUPFAM" id="SSF54843">
    <property type="entry name" value="Ribosomal protein L22"/>
    <property type="match status" value="1"/>
</dbReference>
<dbReference type="PROSITE" id="PS00464">
    <property type="entry name" value="RIBOSOMAL_L22"/>
    <property type="match status" value="1"/>
</dbReference>
<name>RL22_SINMW</name>
<reference key="1">
    <citation type="submission" date="2007-06" db="EMBL/GenBank/DDBJ databases">
        <title>Complete sequence of Sinorhizobium medicae WSM419 chromosome.</title>
        <authorList>
            <consortium name="US DOE Joint Genome Institute"/>
            <person name="Copeland A."/>
            <person name="Lucas S."/>
            <person name="Lapidus A."/>
            <person name="Barry K."/>
            <person name="Glavina del Rio T."/>
            <person name="Dalin E."/>
            <person name="Tice H."/>
            <person name="Pitluck S."/>
            <person name="Chain P."/>
            <person name="Malfatti S."/>
            <person name="Shin M."/>
            <person name="Vergez L."/>
            <person name="Schmutz J."/>
            <person name="Larimer F."/>
            <person name="Land M."/>
            <person name="Hauser L."/>
            <person name="Kyrpides N."/>
            <person name="Mikhailova N."/>
            <person name="Reeve W.G."/>
            <person name="Richardson P."/>
        </authorList>
    </citation>
    <scope>NUCLEOTIDE SEQUENCE [LARGE SCALE GENOMIC DNA]</scope>
    <source>
        <strain>WSM419</strain>
    </source>
</reference>
<keyword id="KW-0687">Ribonucleoprotein</keyword>
<keyword id="KW-0689">Ribosomal protein</keyword>
<keyword id="KW-0694">RNA-binding</keyword>
<keyword id="KW-0699">rRNA-binding</keyword>
<gene>
    <name evidence="1" type="primary">rplV</name>
    <name type="ordered locus">Smed_0991</name>
</gene>
<protein>
    <recommendedName>
        <fullName evidence="1">Large ribosomal subunit protein uL22</fullName>
    </recommendedName>
    <alternativeName>
        <fullName evidence="2">50S ribosomal protein L22</fullName>
    </alternativeName>
</protein>
<evidence type="ECO:0000255" key="1">
    <source>
        <dbReference type="HAMAP-Rule" id="MF_01331"/>
    </source>
</evidence>
<evidence type="ECO:0000305" key="2"/>
<sequence length="129" mass="14210">MGKAKAERRLKDNEAQAVARTIRVSPQKLNLVAALIRGKKVDRALAELEFSRKRIAGTVRKTLESAIANAENNHDLDVDSLIVAEAFVGKSIVMKRFHARGRGRASRVEKPFAHLTIVVREVEAKGEAA</sequence>